<name>17KD_RICFE</name>
<evidence type="ECO:0000255" key="1">
    <source>
        <dbReference type="PROSITE-ProRule" id="PRU00303"/>
    </source>
</evidence>
<evidence type="ECO:0000305" key="2"/>
<proteinExistence type="inferred from homology"/>
<organism>
    <name type="scientific">Rickettsia felis (strain ATCC VR-1525 / URRWXCal2)</name>
    <name type="common">Rickettsia azadi</name>
    <dbReference type="NCBI Taxonomy" id="315456"/>
    <lineage>
        <taxon>Bacteria</taxon>
        <taxon>Pseudomonadati</taxon>
        <taxon>Pseudomonadota</taxon>
        <taxon>Alphaproteobacteria</taxon>
        <taxon>Rickettsiales</taxon>
        <taxon>Rickettsiaceae</taxon>
        <taxon>Rickettsieae</taxon>
        <taxon>Rickettsia</taxon>
        <taxon>spotted fever group</taxon>
    </lineage>
</organism>
<feature type="signal peptide" evidence="1">
    <location>
        <begin position="1"/>
        <end position="19"/>
    </location>
</feature>
<feature type="chain" id="PRO_0000277889" description="17 kDa surface antigen">
    <location>
        <begin position="20"/>
        <end position="159"/>
    </location>
</feature>
<feature type="lipid moiety-binding region" description="N-palmitoyl cysteine" evidence="2">
    <location>
        <position position="20"/>
    </location>
</feature>
<feature type="lipid moiety-binding region" description="S-diacylglycerol cysteine" evidence="2">
    <location>
        <position position="20"/>
    </location>
</feature>
<gene>
    <name type="primary">omp</name>
    <name type="ordered locus">RF_1321</name>
</gene>
<protein>
    <recommendedName>
        <fullName>17 kDa surface antigen</fullName>
    </recommendedName>
</protein>
<comment type="subcellular location">
    <subcellularLocation>
        <location evidence="2">Cell outer membrane</location>
        <topology evidence="2">Lipid-anchor</topology>
    </subcellularLocation>
</comment>
<comment type="similarity">
    <text evidence="2">Belongs to the rickettsiale 17 kDa surface antigen family.</text>
</comment>
<dbReference type="EMBL" id="AF195118">
    <property type="protein sequence ID" value="AAG28452.1"/>
    <property type="molecule type" value="Genomic_DNA"/>
</dbReference>
<dbReference type="EMBL" id="CP000053">
    <property type="protein sequence ID" value="AAY62172.1"/>
    <property type="molecule type" value="Genomic_DNA"/>
</dbReference>
<dbReference type="STRING" id="315456.RF_1321"/>
<dbReference type="KEGG" id="rfe:RF_1321"/>
<dbReference type="eggNOG" id="COG4520">
    <property type="taxonomic scope" value="Bacteria"/>
</dbReference>
<dbReference type="HOGENOM" id="CLU_118535_0_0_5"/>
<dbReference type="OrthoDB" id="5402098at2"/>
<dbReference type="Proteomes" id="UP000008548">
    <property type="component" value="Chromosome"/>
</dbReference>
<dbReference type="GO" id="GO:0009279">
    <property type="term" value="C:cell outer membrane"/>
    <property type="evidence" value="ECO:0007669"/>
    <property type="project" value="UniProtKB-SubCell"/>
</dbReference>
<dbReference type="InterPro" id="IPR032635">
    <property type="entry name" value="Anti_2"/>
</dbReference>
<dbReference type="InterPro" id="IPR008816">
    <property type="entry name" value="Gly_zipper_2TM_dom"/>
</dbReference>
<dbReference type="InterPro" id="IPR016364">
    <property type="entry name" value="Surface_antigen_Rickettsia"/>
</dbReference>
<dbReference type="Pfam" id="PF16998">
    <property type="entry name" value="17kDa_Anti_2"/>
    <property type="match status" value="1"/>
</dbReference>
<dbReference type="Pfam" id="PF05433">
    <property type="entry name" value="Rick_17kDa_Anti"/>
    <property type="match status" value="1"/>
</dbReference>
<dbReference type="PIRSF" id="PIRSF002721">
    <property type="entry name" value="Surface_antigen_Rickettsia"/>
    <property type="match status" value="1"/>
</dbReference>
<dbReference type="PROSITE" id="PS51257">
    <property type="entry name" value="PROKAR_LIPOPROTEIN"/>
    <property type="match status" value="1"/>
</dbReference>
<accession>Q9F9F2</accession>
<accession>Q4UJW7</accession>
<sequence>MKLLSKIMIIALAASMLQACNGPGGMNKQGTGTLLGGAGGALLGSQFGKGKGQLVGVGVGALLGAVLGGQIGAGMDEQDRRLAELTSQRALEATPSGTSVEWRNPDNGNHGYVTPNKTYRNSTGQYCREYTQTVVIGGKQQKAYGNACRQPDGLWQVVN</sequence>
<reference key="1">
    <citation type="journal article" date="2001" name="Int. J. Syst. Evol. Microbiol.">
        <title>Rickettsia felis: molecular characterization of a new member of the spotted fever group.</title>
        <authorList>
            <person name="Bouyer D.H."/>
            <person name="Stenos J."/>
            <person name="Crocquet-Valdes P."/>
            <person name="Moron C.G."/>
            <person name="Popov V.L."/>
            <person name="Zavala-Velazquez J.E."/>
            <person name="Foil L.D."/>
            <person name="Stothard D.R."/>
            <person name="Azad A.F."/>
            <person name="Walker D.H."/>
        </authorList>
    </citation>
    <scope>NUCLEOTIDE SEQUENCE [GENOMIC DNA]</scope>
</reference>
<reference key="2">
    <citation type="journal article" date="2005" name="PLoS Biol.">
        <title>The genome sequence of Rickettsia felis identifies the first putative conjugative plasmid in an obligate intracellular parasite.</title>
        <authorList>
            <person name="Ogata H."/>
            <person name="Renesto P."/>
            <person name="Audic S."/>
            <person name="Robert C."/>
            <person name="Blanc G."/>
            <person name="Fournier P.-E."/>
            <person name="Parinello H."/>
            <person name="Claverie J.-M."/>
            <person name="Raoult D."/>
        </authorList>
    </citation>
    <scope>NUCLEOTIDE SEQUENCE [LARGE SCALE GENOMIC DNA]</scope>
    <source>
        <strain>ATCC VR-1525 / URRWXCal2</strain>
    </source>
</reference>
<keyword id="KW-0998">Cell outer membrane</keyword>
<keyword id="KW-0449">Lipoprotein</keyword>
<keyword id="KW-0472">Membrane</keyword>
<keyword id="KW-0564">Palmitate</keyword>
<keyword id="KW-0732">Signal</keyword>